<sequence length="263" mass="29146">MSDILNISCYKFTPLPDAAALRDTLAERAQALALKGTILLAEEGINFFLAGPAQAVHSFVDQLRADDRFADLAPKESWSDTVPFRKMLVKVKREIIRMDHPTIRPAEGRAPSVSPATLRRWLEQGHDDEGREVVTLDTRNDFEVDAGAFKDTIDWRITKFTEFPPALRAHKAELADKTVVSYCTGGIRCEKAAILMRDEGLEHVYQLEGGILKYFEETDGAFYDGGCFVFDERRAVGADLAITPLAPAEPLEPIQPTSPPGKA</sequence>
<reference key="1">
    <citation type="submission" date="2007-11" db="EMBL/GenBank/DDBJ databases">
        <title>Complete sequence of Delftia acidovorans DSM 14801 / SPH-1.</title>
        <authorList>
            <person name="Copeland A."/>
            <person name="Lucas S."/>
            <person name="Lapidus A."/>
            <person name="Barry K."/>
            <person name="Glavina del Rio T."/>
            <person name="Dalin E."/>
            <person name="Tice H."/>
            <person name="Pitluck S."/>
            <person name="Lowry S."/>
            <person name="Clum A."/>
            <person name="Schmutz J."/>
            <person name="Larimer F."/>
            <person name="Land M."/>
            <person name="Hauser L."/>
            <person name="Kyrpides N."/>
            <person name="Kim E."/>
            <person name="Schleheck D."/>
            <person name="Richardson P."/>
        </authorList>
    </citation>
    <scope>NUCLEOTIDE SEQUENCE [LARGE SCALE GENOMIC DNA]</scope>
    <source>
        <strain>DSM 14801 / SPH-1</strain>
    </source>
</reference>
<proteinExistence type="inferred from homology"/>
<protein>
    <recommendedName>
        <fullName evidence="1">tRNA uridine(34) hydroxylase</fullName>
        <ecNumber evidence="1">1.14.-.-</ecNumber>
    </recommendedName>
    <alternativeName>
        <fullName evidence="1">tRNA hydroxylation protein O</fullName>
    </alternativeName>
</protein>
<keyword id="KW-0560">Oxidoreductase</keyword>
<keyword id="KW-1185">Reference proteome</keyword>
<keyword id="KW-0819">tRNA processing</keyword>
<gene>
    <name evidence="1" type="primary">trhO</name>
    <name type="ordered locus">Daci_4043</name>
</gene>
<feature type="chain" id="PRO_1000135468" description="tRNA uridine(34) hydroxylase">
    <location>
        <begin position="1"/>
        <end position="263"/>
    </location>
</feature>
<feature type="domain" description="Rhodanese" evidence="1">
    <location>
        <begin position="129"/>
        <end position="223"/>
    </location>
</feature>
<feature type="active site" description="Cysteine persulfide intermediate" evidence="1">
    <location>
        <position position="183"/>
    </location>
</feature>
<organism>
    <name type="scientific">Delftia acidovorans (strain DSM 14801 / SPH-1)</name>
    <dbReference type="NCBI Taxonomy" id="398578"/>
    <lineage>
        <taxon>Bacteria</taxon>
        <taxon>Pseudomonadati</taxon>
        <taxon>Pseudomonadota</taxon>
        <taxon>Betaproteobacteria</taxon>
        <taxon>Burkholderiales</taxon>
        <taxon>Comamonadaceae</taxon>
        <taxon>Delftia</taxon>
    </lineage>
</organism>
<accession>A9C0A8</accession>
<comment type="function">
    <text evidence="1">Catalyzes oxygen-dependent 5-hydroxyuridine (ho5U) modification at position 34 in tRNAs.</text>
</comment>
<comment type="catalytic activity">
    <reaction evidence="1">
        <text>uridine(34) in tRNA + AH2 + O2 = 5-hydroxyuridine(34) in tRNA + A + H2O</text>
        <dbReference type="Rhea" id="RHEA:64224"/>
        <dbReference type="Rhea" id="RHEA-COMP:11727"/>
        <dbReference type="Rhea" id="RHEA-COMP:13381"/>
        <dbReference type="ChEBI" id="CHEBI:13193"/>
        <dbReference type="ChEBI" id="CHEBI:15377"/>
        <dbReference type="ChEBI" id="CHEBI:15379"/>
        <dbReference type="ChEBI" id="CHEBI:17499"/>
        <dbReference type="ChEBI" id="CHEBI:65315"/>
        <dbReference type="ChEBI" id="CHEBI:136877"/>
    </reaction>
</comment>
<comment type="similarity">
    <text evidence="1">Belongs to the TrhO family.</text>
</comment>
<name>TRHO_DELAS</name>
<dbReference type="EC" id="1.14.-.-" evidence="1"/>
<dbReference type="EMBL" id="CP000884">
    <property type="protein sequence ID" value="ABX36674.1"/>
    <property type="molecule type" value="Genomic_DNA"/>
</dbReference>
<dbReference type="RefSeq" id="WP_012205868.1">
    <property type="nucleotide sequence ID" value="NC_010002.1"/>
</dbReference>
<dbReference type="SMR" id="A9C0A8"/>
<dbReference type="STRING" id="398578.Daci_4043"/>
<dbReference type="GeneID" id="24116587"/>
<dbReference type="KEGG" id="dac:Daci_4043"/>
<dbReference type="eggNOG" id="COG1054">
    <property type="taxonomic scope" value="Bacteria"/>
</dbReference>
<dbReference type="HOGENOM" id="CLU_038878_0_1_4"/>
<dbReference type="Proteomes" id="UP000000784">
    <property type="component" value="Chromosome"/>
</dbReference>
<dbReference type="GO" id="GO:0016705">
    <property type="term" value="F:oxidoreductase activity, acting on paired donors, with incorporation or reduction of molecular oxygen"/>
    <property type="evidence" value="ECO:0007669"/>
    <property type="project" value="UniProtKB-UniRule"/>
</dbReference>
<dbReference type="GO" id="GO:0006400">
    <property type="term" value="P:tRNA modification"/>
    <property type="evidence" value="ECO:0007669"/>
    <property type="project" value="UniProtKB-UniRule"/>
</dbReference>
<dbReference type="CDD" id="cd01518">
    <property type="entry name" value="RHOD_YceA"/>
    <property type="match status" value="1"/>
</dbReference>
<dbReference type="Gene3D" id="3.30.70.100">
    <property type="match status" value="1"/>
</dbReference>
<dbReference type="Gene3D" id="3.40.250.10">
    <property type="entry name" value="Rhodanese-like domain"/>
    <property type="match status" value="1"/>
</dbReference>
<dbReference type="HAMAP" id="MF_00469">
    <property type="entry name" value="TrhO"/>
    <property type="match status" value="1"/>
</dbReference>
<dbReference type="InterPro" id="IPR001763">
    <property type="entry name" value="Rhodanese-like_dom"/>
</dbReference>
<dbReference type="InterPro" id="IPR036873">
    <property type="entry name" value="Rhodanese-like_dom_sf"/>
</dbReference>
<dbReference type="InterPro" id="IPR020936">
    <property type="entry name" value="TrhO"/>
</dbReference>
<dbReference type="InterPro" id="IPR040503">
    <property type="entry name" value="TRHO_N"/>
</dbReference>
<dbReference type="NCBIfam" id="NF003703">
    <property type="entry name" value="PRK05320.1"/>
    <property type="match status" value="1"/>
</dbReference>
<dbReference type="PANTHER" id="PTHR43268:SF3">
    <property type="entry name" value="RHODANESE-LIKE DOMAIN-CONTAINING PROTEIN 7-RELATED"/>
    <property type="match status" value="1"/>
</dbReference>
<dbReference type="PANTHER" id="PTHR43268">
    <property type="entry name" value="THIOSULFATE SULFURTRANSFERASE/RHODANESE-LIKE DOMAIN-CONTAINING PROTEIN 2"/>
    <property type="match status" value="1"/>
</dbReference>
<dbReference type="Pfam" id="PF00581">
    <property type="entry name" value="Rhodanese"/>
    <property type="match status" value="1"/>
</dbReference>
<dbReference type="Pfam" id="PF17773">
    <property type="entry name" value="UPF0176_N"/>
    <property type="match status" value="1"/>
</dbReference>
<dbReference type="SMART" id="SM00450">
    <property type="entry name" value="RHOD"/>
    <property type="match status" value="1"/>
</dbReference>
<dbReference type="SUPFAM" id="SSF52821">
    <property type="entry name" value="Rhodanese/Cell cycle control phosphatase"/>
    <property type="match status" value="1"/>
</dbReference>
<dbReference type="PROSITE" id="PS50206">
    <property type="entry name" value="RHODANESE_3"/>
    <property type="match status" value="1"/>
</dbReference>
<evidence type="ECO:0000255" key="1">
    <source>
        <dbReference type="HAMAP-Rule" id="MF_00469"/>
    </source>
</evidence>